<accession>B5FJ02</accession>
<gene>
    <name evidence="1" type="primary">clcA</name>
    <name evidence="1" type="synonym">eriC</name>
    <name type="ordered locus">SeD_A0223</name>
</gene>
<keyword id="KW-0050">Antiport</keyword>
<keyword id="KW-0997">Cell inner membrane</keyword>
<keyword id="KW-1003">Cell membrane</keyword>
<keyword id="KW-0868">Chloride</keyword>
<keyword id="KW-0406">Ion transport</keyword>
<keyword id="KW-0472">Membrane</keyword>
<keyword id="KW-0812">Transmembrane</keyword>
<keyword id="KW-1133">Transmembrane helix</keyword>
<keyword id="KW-0813">Transport</keyword>
<comment type="function">
    <text evidence="1">Proton-coupled chloride transporter. Functions as antiport system and exchanges two chloride ions for 1 proton. Probably acts as an electrical shunt for an outwardly-directed proton pump that is linked to amino acid decarboxylation, as part of the extreme acid resistance (XAR) response.</text>
</comment>
<comment type="catalytic activity">
    <reaction evidence="1">
        <text>2 chloride(in) + H(+)(out) = 2 chloride(out) + H(+)(in)</text>
        <dbReference type="Rhea" id="RHEA:29567"/>
        <dbReference type="ChEBI" id="CHEBI:15378"/>
        <dbReference type="ChEBI" id="CHEBI:17996"/>
    </reaction>
</comment>
<comment type="subunit">
    <text evidence="1">Homodimer.</text>
</comment>
<comment type="subcellular location">
    <subcellularLocation>
        <location evidence="1">Cell inner membrane</location>
        <topology evidence="1">Multi-pass membrane protein</topology>
    </subcellularLocation>
</comment>
<comment type="similarity">
    <text evidence="1">Belongs to the chloride channel (TC 2.A.49) family. ClcA subfamily.</text>
</comment>
<reference key="1">
    <citation type="journal article" date="2011" name="J. Bacteriol.">
        <title>Comparative genomics of 28 Salmonella enterica isolates: evidence for CRISPR-mediated adaptive sublineage evolution.</title>
        <authorList>
            <person name="Fricke W.F."/>
            <person name="Mammel M.K."/>
            <person name="McDermott P.F."/>
            <person name="Tartera C."/>
            <person name="White D.G."/>
            <person name="Leclerc J.E."/>
            <person name="Ravel J."/>
            <person name="Cebula T.A."/>
        </authorList>
    </citation>
    <scope>NUCLEOTIDE SEQUENCE [LARGE SCALE GENOMIC DNA]</scope>
    <source>
        <strain>CT_02021853</strain>
    </source>
</reference>
<dbReference type="EMBL" id="CP001144">
    <property type="protein sequence ID" value="ACH75325.1"/>
    <property type="molecule type" value="Genomic_DNA"/>
</dbReference>
<dbReference type="RefSeq" id="WP_000845428.1">
    <property type="nucleotide sequence ID" value="NC_011205.1"/>
</dbReference>
<dbReference type="SMR" id="B5FJ02"/>
<dbReference type="KEGG" id="sed:SeD_A0223"/>
<dbReference type="HOGENOM" id="CLU_015263_7_0_6"/>
<dbReference type="Proteomes" id="UP000008322">
    <property type="component" value="Chromosome"/>
</dbReference>
<dbReference type="GO" id="GO:0005886">
    <property type="term" value="C:plasma membrane"/>
    <property type="evidence" value="ECO:0007669"/>
    <property type="project" value="UniProtKB-SubCell"/>
</dbReference>
<dbReference type="GO" id="GO:0015297">
    <property type="term" value="F:antiporter activity"/>
    <property type="evidence" value="ECO:0007669"/>
    <property type="project" value="UniProtKB-UniRule"/>
</dbReference>
<dbReference type="GO" id="GO:0005247">
    <property type="term" value="F:voltage-gated chloride channel activity"/>
    <property type="evidence" value="ECO:0007669"/>
    <property type="project" value="TreeGrafter"/>
</dbReference>
<dbReference type="CDD" id="cd01031">
    <property type="entry name" value="EriC"/>
    <property type="match status" value="1"/>
</dbReference>
<dbReference type="FunFam" id="1.10.3080.10:FF:000005">
    <property type="entry name" value="H(+)/Cl(-) exchange transporter ClcA"/>
    <property type="match status" value="1"/>
</dbReference>
<dbReference type="Gene3D" id="1.10.3080.10">
    <property type="entry name" value="Clc chloride channel"/>
    <property type="match status" value="1"/>
</dbReference>
<dbReference type="HAMAP" id="MF_01128">
    <property type="entry name" value="CLC_ClcA"/>
    <property type="match status" value="1"/>
</dbReference>
<dbReference type="InterPro" id="IPR023861">
    <property type="entry name" value="Cl-channel_ClcA"/>
</dbReference>
<dbReference type="InterPro" id="IPR014743">
    <property type="entry name" value="Cl-channel_core"/>
</dbReference>
<dbReference type="InterPro" id="IPR001807">
    <property type="entry name" value="ClC"/>
</dbReference>
<dbReference type="NCBIfam" id="NF003640">
    <property type="entry name" value="PRK05277.1"/>
    <property type="match status" value="1"/>
</dbReference>
<dbReference type="PANTHER" id="PTHR45711">
    <property type="entry name" value="CHLORIDE CHANNEL PROTEIN"/>
    <property type="match status" value="1"/>
</dbReference>
<dbReference type="PANTHER" id="PTHR45711:SF6">
    <property type="entry name" value="CHLORIDE CHANNEL PROTEIN"/>
    <property type="match status" value="1"/>
</dbReference>
<dbReference type="Pfam" id="PF00654">
    <property type="entry name" value="Voltage_CLC"/>
    <property type="match status" value="1"/>
</dbReference>
<dbReference type="PRINTS" id="PR00762">
    <property type="entry name" value="CLCHANNEL"/>
</dbReference>
<dbReference type="SUPFAM" id="SSF81340">
    <property type="entry name" value="Clc chloride channel"/>
    <property type="match status" value="1"/>
</dbReference>
<protein>
    <recommendedName>
        <fullName evidence="1">H(+)/Cl(-) exchange transporter ClcA</fullName>
    </recommendedName>
</protein>
<name>CLCA_SALDC</name>
<proteinExistence type="inferred from homology"/>
<evidence type="ECO:0000255" key="1">
    <source>
        <dbReference type="HAMAP-Rule" id="MF_01128"/>
    </source>
</evidence>
<sequence>MKTDTSTFLAQQIVRLRRRDQIRRLMQRDKTPLAILFMAAVVGTLTGLVGVAFEKAVSWVQNMRIGALVQVADHAFLLWPLAFILSALLAMVGYFLVRKFAPEAGGSGIPEIEGALEELRPVRWWRVLPVKFIGGMGTLGAGMVLGREGPTVQIGGNLGRMVLDVFRMRSAEARHTLLATGAAAGLSAAFNAPLAGILFIIEEMRPQFRYNLISIKAVFTGVIMSSIVFRIFNGEAPIIEVGKLSDAPVNTLWLYLILGIIFGCVGPVFNSLVLRTQDMFQRFHGGEIKKWVLMGGAIGGLCGILGLIEPEAAGGGFNLIPIAAAGNFSVGLLLFIFIARVVTTLLCFSSGAPGGIFAPMLALGTLLGTAFGMAAAVLFPQYHLEAGTFAIAGMGALMAASVRAPLTGIVLVLEMTDNYQLILPMIITCLGATLLAQFLGGKPLYSTILARTLAKQDAEQAAKNQNAPAGENT</sequence>
<organism>
    <name type="scientific">Salmonella dublin (strain CT_02021853)</name>
    <dbReference type="NCBI Taxonomy" id="439851"/>
    <lineage>
        <taxon>Bacteria</taxon>
        <taxon>Pseudomonadati</taxon>
        <taxon>Pseudomonadota</taxon>
        <taxon>Gammaproteobacteria</taxon>
        <taxon>Enterobacterales</taxon>
        <taxon>Enterobacteriaceae</taxon>
        <taxon>Salmonella</taxon>
    </lineage>
</organism>
<feature type="chain" id="PRO_1000137304" description="H(+)/Cl(-) exchange transporter ClcA">
    <location>
        <begin position="1"/>
        <end position="473"/>
    </location>
</feature>
<feature type="topological domain" description="Cytoplasmic" evidence="1">
    <location>
        <begin position="1"/>
        <end position="32"/>
    </location>
</feature>
<feature type="transmembrane region" description="Helical" evidence="1">
    <location>
        <begin position="33"/>
        <end position="69"/>
    </location>
</feature>
<feature type="topological domain" description="Periplasmic" evidence="1">
    <location>
        <begin position="70"/>
        <end position="76"/>
    </location>
</feature>
<feature type="transmembrane region" description="Helical" evidence="1">
    <location>
        <begin position="77"/>
        <end position="100"/>
    </location>
</feature>
<feature type="intramembrane region" description="Helical" evidence="1">
    <location>
        <begin position="109"/>
        <end position="116"/>
    </location>
</feature>
<feature type="topological domain" description="Cytoplasmic" evidence="1">
    <location>
        <begin position="117"/>
        <end position="123"/>
    </location>
</feature>
<feature type="transmembrane region" description="Helical" evidence="1">
    <location>
        <begin position="124"/>
        <end position="141"/>
    </location>
</feature>
<feature type="transmembrane region" description="Helical" evidence="1">
    <location>
        <begin position="148"/>
        <end position="166"/>
    </location>
</feature>
<feature type="topological domain" description="Cytoplasmic" evidence="1">
    <location>
        <begin position="167"/>
        <end position="176"/>
    </location>
</feature>
<feature type="intramembrane region" description="Helical" evidence="1">
    <location>
        <begin position="177"/>
        <end position="189"/>
    </location>
</feature>
<feature type="intramembrane region" description="Helical" evidence="1">
    <location>
        <begin position="193"/>
        <end position="201"/>
    </location>
</feature>
<feature type="topological domain" description="Cytoplasmic" evidence="1">
    <location>
        <begin position="202"/>
        <end position="214"/>
    </location>
</feature>
<feature type="transmembrane region" description="Helical" evidence="1">
    <location>
        <begin position="215"/>
        <end position="232"/>
    </location>
</feature>
<feature type="topological domain" description="Periplasmic" evidence="1">
    <location>
        <begin position="233"/>
        <end position="252"/>
    </location>
</feature>
<feature type="transmembrane region" description="Helical" evidence="1">
    <location>
        <begin position="253"/>
        <end position="281"/>
    </location>
</feature>
<feature type="topological domain" description="Cytoplasmic" evidence="1">
    <location>
        <begin position="282"/>
        <end position="287"/>
    </location>
</feature>
<feature type="transmembrane region" description="Helical" evidence="1">
    <location>
        <begin position="288"/>
        <end position="309"/>
    </location>
</feature>
<feature type="topological domain" description="Periplasmic" evidence="1">
    <location>
        <begin position="310"/>
        <end position="329"/>
    </location>
</feature>
<feature type="transmembrane region" description="Helical" evidence="1">
    <location>
        <begin position="330"/>
        <end position="349"/>
    </location>
</feature>
<feature type="transmembrane region" description="Helical" evidence="1">
    <location>
        <begin position="355"/>
        <end position="376"/>
    </location>
</feature>
<feature type="topological domain" description="Periplasmic" evidence="1">
    <location>
        <begin position="377"/>
        <end position="386"/>
    </location>
</feature>
<feature type="intramembrane region" description="Helical" evidence="1">
    <location>
        <begin position="387"/>
        <end position="401"/>
    </location>
</feature>
<feature type="intramembrane region" description="Note=Loop between two helices" evidence="1">
    <location>
        <begin position="402"/>
        <end position="404"/>
    </location>
</feature>
<feature type="intramembrane region" description="Helical" evidence="1">
    <location>
        <begin position="405"/>
        <end position="416"/>
    </location>
</feature>
<feature type="intramembrane region" description="Note=Loop between two helices" evidence="1">
    <location>
        <begin position="417"/>
        <end position="421"/>
    </location>
</feature>
<feature type="transmembrane region" description="Helical" evidence="1">
    <location>
        <begin position="422"/>
        <end position="438"/>
    </location>
</feature>
<feature type="topological domain" description="Cytoplasmic" evidence="1">
    <location>
        <begin position="439"/>
        <end position="473"/>
    </location>
</feature>
<feature type="short sequence motif" description="Selectivity filter part_1" evidence="1">
    <location>
        <begin position="106"/>
        <end position="110"/>
    </location>
</feature>
<feature type="short sequence motif" description="Selectivity filter part_2" evidence="1">
    <location>
        <begin position="146"/>
        <end position="150"/>
    </location>
</feature>
<feature type="short sequence motif" description="Selectivity filter part_3" evidence="1">
    <location>
        <begin position="355"/>
        <end position="359"/>
    </location>
</feature>
<feature type="binding site" evidence="1">
    <location>
        <position position="107"/>
    </location>
    <ligand>
        <name>chloride</name>
        <dbReference type="ChEBI" id="CHEBI:17996"/>
    </ligand>
</feature>
<feature type="binding site" evidence="1">
    <location>
        <position position="356"/>
    </location>
    <ligand>
        <name>chloride</name>
        <dbReference type="ChEBI" id="CHEBI:17996"/>
    </ligand>
</feature>
<feature type="binding site" evidence="1">
    <location>
        <position position="357"/>
    </location>
    <ligand>
        <name>chloride</name>
        <dbReference type="ChEBI" id="CHEBI:17996"/>
    </ligand>
</feature>
<feature type="binding site" evidence="1">
    <location>
        <position position="445"/>
    </location>
    <ligand>
        <name>chloride</name>
        <dbReference type="ChEBI" id="CHEBI:17996"/>
    </ligand>
</feature>
<feature type="site" description="Mediates proton transfer from the outer aqueous phase to the interior of the protein; involved in linking H(+) and Cl(-) transport" evidence="1">
    <location>
        <position position="148"/>
    </location>
</feature>
<feature type="site" description="Mediates proton transfer from the protein to the inner aqueous phase" evidence="1">
    <location>
        <position position="203"/>
    </location>
</feature>